<proteinExistence type="inferred from homology"/>
<gene>
    <name evidence="1" type="primary">lutA2</name>
    <name type="ordered locus">BAMEG_3282</name>
</gene>
<sequence length="239" mass="26190">MKVTLFVTCLVDMFETNVGKATVEVLERLGCEIEFPEAQVCCGQPAYNSGHVEAAKEAMKHMIETFEDAEYIVTPSGSCATMFHEYPHVFKDDPKWAKRAQKVADKTYEFTQFIVDVLKVTDVGASLPGIATIHKSCHMTRMLGVTEAPGILLSNVKGLTVRELPNVQNCCGFGGTFSVKMTPISEQMVDEKVDSAMETGADYLIGADCGCLLNIGGRIERLGKEIKVMHIAEVLNSRS</sequence>
<organism>
    <name type="scientific">Bacillus anthracis (strain CDC 684 / NRRL 3495)</name>
    <dbReference type="NCBI Taxonomy" id="568206"/>
    <lineage>
        <taxon>Bacteria</taxon>
        <taxon>Bacillati</taxon>
        <taxon>Bacillota</taxon>
        <taxon>Bacilli</taxon>
        <taxon>Bacillales</taxon>
        <taxon>Bacillaceae</taxon>
        <taxon>Bacillus</taxon>
        <taxon>Bacillus cereus group</taxon>
    </lineage>
</organism>
<name>LUTA2_BACAC</name>
<feature type="chain" id="PRO_0000384020" description="Lactate utilization protein A 2">
    <location>
        <begin position="1"/>
        <end position="239"/>
    </location>
</feature>
<dbReference type="EMBL" id="CP001215">
    <property type="protein sequence ID" value="ACP12457.1"/>
    <property type="molecule type" value="Genomic_DNA"/>
</dbReference>
<dbReference type="RefSeq" id="WP_000869149.1">
    <property type="nucleotide sequence ID" value="NC_012581.1"/>
</dbReference>
<dbReference type="SMR" id="C3LAQ4"/>
<dbReference type="KEGG" id="bah:BAMEG_3282"/>
<dbReference type="HOGENOM" id="CLU_023081_1_0_9"/>
<dbReference type="GO" id="GO:0005829">
    <property type="term" value="C:cytosol"/>
    <property type="evidence" value="ECO:0007669"/>
    <property type="project" value="TreeGrafter"/>
</dbReference>
<dbReference type="GO" id="GO:0016491">
    <property type="term" value="F:oxidoreductase activity"/>
    <property type="evidence" value="ECO:0007669"/>
    <property type="project" value="UniProtKB-ARBA"/>
</dbReference>
<dbReference type="GO" id="GO:0006089">
    <property type="term" value="P:lactate metabolic process"/>
    <property type="evidence" value="ECO:0007669"/>
    <property type="project" value="UniProtKB-UniRule"/>
</dbReference>
<dbReference type="HAMAP" id="MF_02105">
    <property type="entry name" value="LutA"/>
    <property type="match status" value="1"/>
</dbReference>
<dbReference type="InterPro" id="IPR004017">
    <property type="entry name" value="Cys_rich_dom"/>
</dbReference>
<dbReference type="InterPro" id="IPR022822">
    <property type="entry name" value="LutA"/>
</dbReference>
<dbReference type="PANTHER" id="PTHR30296:SF0">
    <property type="entry name" value="LACTATE UTILIZATION PROTEIN A"/>
    <property type="match status" value="1"/>
</dbReference>
<dbReference type="PANTHER" id="PTHR30296">
    <property type="entry name" value="UNCHARACTERIZED PROTEIN YKGE"/>
    <property type="match status" value="1"/>
</dbReference>
<dbReference type="Pfam" id="PF02754">
    <property type="entry name" value="CCG"/>
    <property type="match status" value="2"/>
</dbReference>
<accession>C3LAQ4</accession>
<reference key="1">
    <citation type="submission" date="2008-10" db="EMBL/GenBank/DDBJ databases">
        <title>Genome sequence of Bacillus anthracis str. CDC 684.</title>
        <authorList>
            <person name="Dodson R.J."/>
            <person name="Munk A.C."/>
            <person name="Brettin T."/>
            <person name="Bruce D."/>
            <person name="Detter C."/>
            <person name="Tapia R."/>
            <person name="Han C."/>
            <person name="Sutton G."/>
            <person name="Sims D."/>
        </authorList>
    </citation>
    <scope>NUCLEOTIDE SEQUENCE [LARGE SCALE GENOMIC DNA]</scope>
    <source>
        <strain>CDC 684 / NRRL 3495</strain>
    </source>
</reference>
<comment type="function">
    <text evidence="1">Is involved in L-lactate degradation and allows cells to grow with lactate as the sole carbon source.</text>
</comment>
<comment type="similarity">
    <text evidence="1">Belongs to the LutA/YkgE family.</text>
</comment>
<evidence type="ECO:0000255" key="1">
    <source>
        <dbReference type="HAMAP-Rule" id="MF_02105"/>
    </source>
</evidence>
<protein>
    <recommendedName>
        <fullName evidence="1">Lactate utilization protein A 2</fullName>
    </recommendedName>
</protein>